<keyword id="KW-0927">Auxin signaling pathway</keyword>
<keyword id="KW-1003">Cell membrane</keyword>
<keyword id="KW-0217">Developmental protein</keyword>
<keyword id="KW-0341">Growth regulation</keyword>
<keyword id="KW-0472">Membrane</keyword>
<keyword id="KW-1185">Reference proteome</keyword>
<name>SAU27_ARATH</name>
<evidence type="ECO:0000250" key="1">
    <source>
        <dbReference type="UniProtKB" id="Q9FJG1"/>
    </source>
</evidence>
<evidence type="ECO:0000269" key="2">
    <source>
    </source>
</evidence>
<evidence type="ECO:0000303" key="3">
    <source>
    </source>
</evidence>
<evidence type="ECO:0000305" key="4"/>
<evidence type="ECO:0000312" key="5">
    <source>
        <dbReference type="Araport" id="AT3G03840"/>
    </source>
</evidence>
<evidence type="ECO:0000312" key="6">
    <source>
        <dbReference type="EMBL" id="AAF00634.1"/>
    </source>
</evidence>
<comment type="function">
    <text evidence="1 2">Functions as a positive effector of cell expansion through modulation of auxin transport (By similarity). Involved in thermo-responsiveness of plant architecture (PubMed:31127632). Enhances plasma membrane H(+)-ATPase (PubMed:31127632).</text>
</comment>
<comment type="subunit">
    <text evidence="2">Interacts with PP2C-D1.</text>
</comment>
<comment type="subcellular location">
    <subcellularLocation>
        <location evidence="1">Cell membrane</location>
        <topology evidence="1">Peripheral membrane protein</topology>
    </subcellularLocation>
</comment>
<comment type="tissue specificity">
    <text evidence="2">Higher expression in thermo-responsive cultivars (e.g. cv. Alst-1, cv. Ang-0 and cv. Com-0) than in low thermo-responsive cultivars (e.g. cv. Dja-1, cv. El-0 and cv. Kon).</text>
</comment>
<comment type="induction">
    <text evidence="2">PIF4-dependent regulation by temperature (PubMed:31127632). In low thermo-responsive cultivars (e.g. Col-0), higher expression at 28 degrees Celsius than at 22 degrees Celsius in petioles but not in leaf blades (PubMed:31127632). In high thermo-responsive cultivars (e.g. cv. Alst-1 and cv. Ang-0) higher expression at 28 degrees Celsius than at 22 degrees Celsius in both petioles and leaf blades (PubMed:31127632).</text>
</comment>
<comment type="disruption phenotype">
    <text evidence="2">Reduced rosette weight and area at 22 degrees Celsius but not at 28 degrees Celsius.</text>
</comment>
<comment type="miscellaneous">
    <text evidence="2">Exhibits a high natural sequence polymorphism between cultivars, thus conferring thermo-adaptation to environmental conditions.</text>
</comment>
<comment type="similarity">
    <text evidence="4">Belongs to the ARG7 family.</text>
</comment>
<accession>Q9SRW1</accession>
<reference key="1">
    <citation type="journal article" date="2000" name="Nature">
        <title>Sequence and analysis of chromosome 3 of the plant Arabidopsis thaliana.</title>
        <authorList>
            <person name="Salanoubat M."/>
            <person name="Lemcke K."/>
            <person name="Rieger M."/>
            <person name="Ansorge W."/>
            <person name="Unseld M."/>
            <person name="Fartmann B."/>
            <person name="Valle G."/>
            <person name="Bloecker H."/>
            <person name="Perez-Alonso M."/>
            <person name="Obermaier B."/>
            <person name="Delseny M."/>
            <person name="Boutry M."/>
            <person name="Grivell L.A."/>
            <person name="Mache R."/>
            <person name="Puigdomenech P."/>
            <person name="De Simone V."/>
            <person name="Choisne N."/>
            <person name="Artiguenave F."/>
            <person name="Robert C."/>
            <person name="Brottier P."/>
            <person name="Wincker P."/>
            <person name="Cattolico L."/>
            <person name="Weissenbach J."/>
            <person name="Saurin W."/>
            <person name="Quetier F."/>
            <person name="Schaefer M."/>
            <person name="Mueller-Auer S."/>
            <person name="Gabel C."/>
            <person name="Fuchs M."/>
            <person name="Benes V."/>
            <person name="Wurmbach E."/>
            <person name="Drzonek H."/>
            <person name="Erfle H."/>
            <person name="Jordan N."/>
            <person name="Bangert S."/>
            <person name="Wiedelmann R."/>
            <person name="Kranz H."/>
            <person name="Voss H."/>
            <person name="Holland R."/>
            <person name="Brandt P."/>
            <person name="Nyakatura G."/>
            <person name="Vezzi A."/>
            <person name="D'Angelo M."/>
            <person name="Pallavicini A."/>
            <person name="Toppo S."/>
            <person name="Simionati B."/>
            <person name="Conrad A."/>
            <person name="Hornischer K."/>
            <person name="Kauer G."/>
            <person name="Loehnert T.-H."/>
            <person name="Nordsiek G."/>
            <person name="Reichelt J."/>
            <person name="Scharfe M."/>
            <person name="Schoen O."/>
            <person name="Bargues M."/>
            <person name="Terol J."/>
            <person name="Climent J."/>
            <person name="Navarro P."/>
            <person name="Collado C."/>
            <person name="Perez-Perez A."/>
            <person name="Ottenwaelder B."/>
            <person name="Duchemin D."/>
            <person name="Cooke R."/>
            <person name="Laudie M."/>
            <person name="Berger-Llauro C."/>
            <person name="Purnelle B."/>
            <person name="Masuy D."/>
            <person name="de Haan M."/>
            <person name="Maarse A.C."/>
            <person name="Alcaraz J.-P."/>
            <person name="Cottet A."/>
            <person name="Casacuberta E."/>
            <person name="Monfort A."/>
            <person name="Argiriou A."/>
            <person name="Flores M."/>
            <person name="Liguori R."/>
            <person name="Vitale D."/>
            <person name="Mannhaupt G."/>
            <person name="Haase D."/>
            <person name="Schoof H."/>
            <person name="Rudd S."/>
            <person name="Zaccaria P."/>
            <person name="Mewes H.-W."/>
            <person name="Mayer K.F.X."/>
            <person name="Kaul S."/>
            <person name="Town C.D."/>
            <person name="Koo H.L."/>
            <person name="Tallon L.J."/>
            <person name="Jenkins J."/>
            <person name="Rooney T."/>
            <person name="Rizzo M."/>
            <person name="Walts A."/>
            <person name="Utterback T."/>
            <person name="Fujii C.Y."/>
            <person name="Shea T.P."/>
            <person name="Creasy T.H."/>
            <person name="Haas B."/>
            <person name="Maiti R."/>
            <person name="Wu D."/>
            <person name="Peterson J."/>
            <person name="Van Aken S."/>
            <person name="Pai G."/>
            <person name="Militscher J."/>
            <person name="Sellers P."/>
            <person name="Gill J.E."/>
            <person name="Feldblyum T.V."/>
            <person name="Preuss D."/>
            <person name="Lin X."/>
            <person name="Nierman W.C."/>
            <person name="Salzberg S.L."/>
            <person name="White O."/>
            <person name="Venter J.C."/>
            <person name="Fraser C.M."/>
            <person name="Kaneko T."/>
            <person name="Nakamura Y."/>
            <person name="Sato S."/>
            <person name="Kato T."/>
            <person name="Asamizu E."/>
            <person name="Sasamoto S."/>
            <person name="Kimura T."/>
            <person name="Idesawa K."/>
            <person name="Kawashima K."/>
            <person name="Kishida Y."/>
            <person name="Kiyokawa C."/>
            <person name="Kohara M."/>
            <person name="Matsumoto M."/>
            <person name="Matsuno A."/>
            <person name="Muraki A."/>
            <person name="Nakayama S."/>
            <person name="Nakazaki N."/>
            <person name="Shinpo S."/>
            <person name="Takeuchi C."/>
            <person name="Wada T."/>
            <person name="Watanabe A."/>
            <person name="Yamada M."/>
            <person name="Yasuda M."/>
            <person name="Tabata S."/>
        </authorList>
    </citation>
    <scope>NUCLEOTIDE SEQUENCE [LARGE SCALE GENOMIC DNA]</scope>
    <source>
        <strain>cv. Columbia</strain>
    </source>
</reference>
<reference key="2">
    <citation type="journal article" date="2017" name="Plant J.">
        <title>Araport11: a complete reannotation of the Arabidopsis thaliana reference genome.</title>
        <authorList>
            <person name="Cheng C.Y."/>
            <person name="Krishnakumar V."/>
            <person name="Chan A.P."/>
            <person name="Thibaud-Nissen F."/>
            <person name="Schobel S."/>
            <person name="Town C.D."/>
        </authorList>
    </citation>
    <scope>GENOME REANNOTATION</scope>
    <source>
        <strain>cv. Columbia</strain>
    </source>
</reference>
<reference key="3">
    <citation type="journal article" date="2002" name="Science">
        <title>Functional annotation of a full-length Arabidopsis cDNA collection.</title>
        <authorList>
            <person name="Seki M."/>
            <person name="Narusaka M."/>
            <person name="Kamiya A."/>
            <person name="Ishida J."/>
            <person name="Satou M."/>
            <person name="Sakurai T."/>
            <person name="Nakajima M."/>
            <person name="Enju A."/>
            <person name="Akiyama K."/>
            <person name="Oono Y."/>
            <person name="Muramatsu M."/>
            <person name="Hayashizaki Y."/>
            <person name="Kawai J."/>
            <person name="Carninci P."/>
            <person name="Itoh M."/>
            <person name="Ishii Y."/>
            <person name="Arakawa T."/>
            <person name="Shibata K."/>
            <person name="Shinagawa A."/>
            <person name="Shinozaki K."/>
        </authorList>
    </citation>
    <scope>NUCLEOTIDE SEQUENCE [LARGE SCALE MRNA]</scope>
    <source>
        <strain>cv. Columbia</strain>
    </source>
</reference>
<reference key="4">
    <citation type="submission" date="2006-02" db="EMBL/GenBank/DDBJ databases">
        <title>Arabidopsis ORF clones.</title>
        <authorList>
            <person name="Shinn P."/>
            <person name="Chen H."/>
            <person name="Kim C.J."/>
            <person name="Ecker J.R."/>
        </authorList>
    </citation>
    <scope>NUCLEOTIDE SEQUENCE [LARGE SCALE MRNA]</scope>
    <source>
        <strain>cv. Columbia</strain>
    </source>
</reference>
<reference key="5">
    <citation type="journal article" date="2012" name="Plant J.">
        <title>The SAUR19 subfamily of SMALL AUXIN UP RNA genes promote cell expansion.</title>
        <authorList>
            <person name="Spartz A.K."/>
            <person name="Lee S.H."/>
            <person name="Wenger J.P."/>
            <person name="Gonzalez N."/>
            <person name="Itoh H."/>
            <person name="Inze D."/>
            <person name="Peer W.A."/>
            <person name="Murphy A.S."/>
            <person name="Overvoorde P.J."/>
            <person name="Gray W.M."/>
        </authorList>
    </citation>
    <scope>GENE FAMILY</scope>
    <source>
        <strain>cv. Columbia</strain>
    </source>
</reference>
<reference key="6">
    <citation type="journal article" date="2019" name="New Phytol.">
        <title>Natural variations of growth thermo-responsiveness determined by SAUR26/27/28 proteins in Arabidopsis thaliana.</title>
        <authorList>
            <person name="Wang Z."/>
            <person name="Yang L."/>
            <person name="Liu Z."/>
            <person name="Lu M."/>
            <person name="Wang M."/>
            <person name="Sun Q."/>
            <person name="Lan Y."/>
            <person name="Shi T."/>
            <person name="Wu D."/>
            <person name="Hua J."/>
        </authorList>
    </citation>
    <scope>FUNCTION</scope>
    <scope>DISRUPTION PHENOTYPE</scope>
    <scope>INDUCTION BY TEMPERATURE AND PIF4</scope>
    <scope>TISSUE SPECIFICITY</scope>
    <scope>INTERACTION WITH PP2C-D1</scope>
    <source>
        <strain>cv. Alst-1</strain>
        <strain>cv. Ang-0</strain>
        <strain>cv. Columbia</strain>
        <strain>cv. Com-0</strain>
        <strain>cv. Dja-1</strain>
        <strain>cv. El-0</strain>
        <strain>cv. Kon</strain>
    </source>
</reference>
<organism>
    <name type="scientific">Arabidopsis thaliana</name>
    <name type="common">Mouse-ear cress</name>
    <dbReference type="NCBI Taxonomy" id="3702"/>
    <lineage>
        <taxon>Eukaryota</taxon>
        <taxon>Viridiplantae</taxon>
        <taxon>Streptophyta</taxon>
        <taxon>Embryophyta</taxon>
        <taxon>Tracheophyta</taxon>
        <taxon>Spermatophyta</taxon>
        <taxon>Magnoliopsida</taxon>
        <taxon>eudicotyledons</taxon>
        <taxon>Gunneridae</taxon>
        <taxon>Pentapetalae</taxon>
        <taxon>rosids</taxon>
        <taxon>malvids</taxon>
        <taxon>Brassicales</taxon>
        <taxon>Brassicaceae</taxon>
        <taxon>Camelineae</taxon>
        <taxon>Arabidopsis</taxon>
    </lineage>
</organism>
<sequence>MALVRSLFVSNKILGGSLAGMRKSTSAPKGFLAVYVGESQKKQRYLVLVSYLSQPLFQDLLSKSEEEFGFDHPMGGLTIPCPEDTFLTVTSRIQG</sequence>
<proteinExistence type="evidence at protein level"/>
<dbReference type="EMBL" id="AC009540">
    <property type="protein sequence ID" value="AAF00634.1"/>
    <property type="molecule type" value="Genomic_DNA"/>
</dbReference>
<dbReference type="EMBL" id="CP002686">
    <property type="protein sequence ID" value="AEE74001.1"/>
    <property type="molecule type" value="Genomic_DNA"/>
</dbReference>
<dbReference type="EMBL" id="BT024648">
    <property type="protein sequence ID" value="ABD57473.1"/>
    <property type="molecule type" value="mRNA"/>
</dbReference>
<dbReference type="EMBL" id="AK117273">
    <property type="protein sequence ID" value="BAC41946.1"/>
    <property type="molecule type" value="mRNA"/>
</dbReference>
<dbReference type="RefSeq" id="NP_187034.1">
    <property type="nucleotide sequence ID" value="NM_111255.4"/>
</dbReference>
<dbReference type="FunCoup" id="Q9SRW1">
    <property type="interactions" value="290"/>
</dbReference>
<dbReference type="STRING" id="3702.Q9SRW1"/>
<dbReference type="PaxDb" id="3702-AT3G03840.1"/>
<dbReference type="DNASU" id="821121"/>
<dbReference type="EnsemblPlants" id="AT3G03840.1">
    <property type="protein sequence ID" value="AT3G03840.1"/>
    <property type="gene ID" value="AT3G03840"/>
</dbReference>
<dbReference type="GeneID" id="821121"/>
<dbReference type="Gramene" id="AT3G03840.1">
    <property type="protein sequence ID" value="AT3G03840.1"/>
    <property type="gene ID" value="AT3G03840"/>
</dbReference>
<dbReference type="KEGG" id="ath:AT3G03840"/>
<dbReference type="Araport" id="AT3G03840"/>
<dbReference type="TAIR" id="AT3G03840">
    <property type="gene designation" value="SAUR27"/>
</dbReference>
<dbReference type="HOGENOM" id="CLU_098106_3_0_1"/>
<dbReference type="InParanoid" id="Q9SRW1"/>
<dbReference type="OMA" id="EYFISIT"/>
<dbReference type="PhylomeDB" id="Q9SRW1"/>
<dbReference type="PRO" id="PR:Q9SRW1"/>
<dbReference type="Proteomes" id="UP000006548">
    <property type="component" value="Chromosome 3"/>
</dbReference>
<dbReference type="ExpressionAtlas" id="Q9SRW1">
    <property type="expression patterns" value="baseline and differential"/>
</dbReference>
<dbReference type="GO" id="GO:0005886">
    <property type="term" value="C:plasma membrane"/>
    <property type="evidence" value="ECO:0007669"/>
    <property type="project" value="UniProtKB-SubCell"/>
</dbReference>
<dbReference type="GO" id="GO:0009734">
    <property type="term" value="P:auxin-activated signaling pathway"/>
    <property type="evidence" value="ECO:0007669"/>
    <property type="project" value="UniProtKB-KW"/>
</dbReference>
<dbReference type="GO" id="GO:0009266">
    <property type="term" value="P:response to temperature stimulus"/>
    <property type="evidence" value="ECO:0000315"/>
    <property type="project" value="UniProtKB"/>
</dbReference>
<dbReference type="InterPro" id="IPR003676">
    <property type="entry name" value="SAUR_fam"/>
</dbReference>
<dbReference type="PANTHER" id="PTHR31929">
    <property type="entry name" value="SAUR-LIKE AUXIN-RESPONSIVE PROTEIN FAMILY-RELATED"/>
    <property type="match status" value="1"/>
</dbReference>
<dbReference type="Pfam" id="PF02519">
    <property type="entry name" value="Auxin_inducible"/>
    <property type="match status" value="1"/>
</dbReference>
<gene>
    <name evidence="3" type="primary">SAUR27</name>
    <name evidence="5" type="ordered locus">At3g03840</name>
    <name evidence="6" type="ORF">F20H23.14</name>
</gene>
<protein>
    <recommendedName>
        <fullName evidence="4">Auxin-responsive protein SAUR27</fullName>
    </recommendedName>
    <alternativeName>
        <fullName evidence="3">Protein SMALL AUXIN UP RNA 27</fullName>
    </alternativeName>
</protein>
<feature type="chain" id="PRO_0000454722" description="Auxin-responsive protein SAUR27">
    <location>
        <begin position="1"/>
        <end position="95"/>
    </location>
</feature>